<dbReference type="EMBL" id="AP000423">
    <property type="protein sequence ID" value="BAA84425.1"/>
    <property type="molecule type" value="Genomic_DNA"/>
</dbReference>
<dbReference type="RefSeq" id="NP_051098.1">
    <property type="nucleotide sequence ID" value="NC_000932.1"/>
</dbReference>
<dbReference type="SMR" id="P56808"/>
<dbReference type="BioGRID" id="29926">
    <property type="interactions" value="15"/>
</dbReference>
<dbReference type="FunCoup" id="P56808">
    <property type="interactions" value="92"/>
</dbReference>
<dbReference type="STRING" id="3702.P56808"/>
<dbReference type="PaxDb" id="3702-ATCG00820.1"/>
<dbReference type="ProteomicsDB" id="228239"/>
<dbReference type="GeneID" id="844720"/>
<dbReference type="KEGG" id="ath:ArthCp063"/>
<dbReference type="Araport" id="ATCG00820"/>
<dbReference type="TAIR" id="ATCG00820"/>
<dbReference type="eggNOG" id="KOG0899">
    <property type="taxonomic scope" value="Eukaryota"/>
</dbReference>
<dbReference type="HOGENOM" id="CLU_144911_0_1_1"/>
<dbReference type="InParanoid" id="P56808"/>
<dbReference type="PRO" id="PR:P56808"/>
<dbReference type="Proteomes" id="UP000006548">
    <property type="component" value="Chloroplast Pltd"/>
</dbReference>
<dbReference type="ExpressionAtlas" id="P56808">
    <property type="expression patterns" value="baseline and differential"/>
</dbReference>
<dbReference type="GO" id="GO:0009507">
    <property type="term" value="C:chloroplast"/>
    <property type="evidence" value="ECO:0007669"/>
    <property type="project" value="UniProtKB-SubCell"/>
</dbReference>
<dbReference type="GO" id="GO:0005763">
    <property type="term" value="C:mitochondrial small ribosomal subunit"/>
    <property type="evidence" value="ECO:0000318"/>
    <property type="project" value="GO_Central"/>
</dbReference>
<dbReference type="GO" id="GO:0019843">
    <property type="term" value="F:rRNA binding"/>
    <property type="evidence" value="ECO:0007669"/>
    <property type="project" value="UniProtKB-UniRule"/>
</dbReference>
<dbReference type="GO" id="GO:0003735">
    <property type="term" value="F:structural constituent of ribosome"/>
    <property type="evidence" value="ECO:0000318"/>
    <property type="project" value="GO_Central"/>
</dbReference>
<dbReference type="GO" id="GO:0000028">
    <property type="term" value="P:ribosomal small subunit assembly"/>
    <property type="evidence" value="ECO:0000318"/>
    <property type="project" value="GO_Central"/>
</dbReference>
<dbReference type="GO" id="GO:0006412">
    <property type="term" value="P:translation"/>
    <property type="evidence" value="ECO:0007669"/>
    <property type="project" value="UniProtKB-UniRule"/>
</dbReference>
<dbReference type="FunFam" id="3.30.860.10:FF:000001">
    <property type="entry name" value="30S ribosomal protein S19"/>
    <property type="match status" value="1"/>
</dbReference>
<dbReference type="Gene3D" id="3.30.860.10">
    <property type="entry name" value="30s Ribosomal Protein S19, Chain A"/>
    <property type="match status" value="1"/>
</dbReference>
<dbReference type="HAMAP" id="MF_00531">
    <property type="entry name" value="Ribosomal_uS19"/>
    <property type="match status" value="1"/>
</dbReference>
<dbReference type="InterPro" id="IPR002222">
    <property type="entry name" value="Ribosomal_uS19"/>
</dbReference>
<dbReference type="InterPro" id="IPR005732">
    <property type="entry name" value="Ribosomal_uS19_bac-type"/>
</dbReference>
<dbReference type="InterPro" id="IPR020934">
    <property type="entry name" value="Ribosomal_uS19_CS"/>
</dbReference>
<dbReference type="InterPro" id="IPR023575">
    <property type="entry name" value="Ribosomal_uS19_SF"/>
</dbReference>
<dbReference type="NCBIfam" id="TIGR01050">
    <property type="entry name" value="rpsS_bact"/>
    <property type="match status" value="1"/>
</dbReference>
<dbReference type="PANTHER" id="PTHR11880">
    <property type="entry name" value="RIBOSOMAL PROTEIN S19P FAMILY MEMBER"/>
    <property type="match status" value="1"/>
</dbReference>
<dbReference type="PANTHER" id="PTHR11880:SF8">
    <property type="entry name" value="SMALL RIBOSOMAL SUBUNIT PROTEIN US19M"/>
    <property type="match status" value="1"/>
</dbReference>
<dbReference type="Pfam" id="PF00203">
    <property type="entry name" value="Ribosomal_S19"/>
    <property type="match status" value="1"/>
</dbReference>
<dbReference type="PIRSF" id="PIRSF002144">
    <property type="entry name" value="Ribosomal_S19"/>
    <property type="match status" value="1"/>
</dbReference>
<dbReference type="PRINTS" id="PR00975">
    <property type="entry name" value="RIBOSOMALS19"/>
</dbReference>
<dbReference type="SUPFAM" id="SSF54570">
    <property type="entry name" value="Ribosomal protein S19"/>
    <property type="match status" value="1"/>
</dbReference>
<dbReference type="PROSITE" id="PS00323">
    <property type="entry name" value="RIBOSOMAL_S19"/>
    <property type="match status" value="1"/>
</dbReference>
<comment type="function">
    <text evidence="1">Protein S19 forms a complex with S13 that binds strongly to the 16S ribosomal RNA.</text>
</comment>
<comment type="subcellular location">
    <subcellularLocation>
        <location>Plastid</location>
        <location>Chloroplast</location>
    </subcellularLocation>
</comment>
<comment type="similarity">
    <text evidence="3">Belongs to the universal ribosomal protein uS19 family.</text>
</comment>
<gene>
    <name type="primary">rps19</name>
    <name type="ordered locus">AtCg00820</name>
</gene>
<name>RR19_ARATH</name>
<protein>
    <recommendedName>
        <fullName evidence="2">Small ribosomal subunit protein uS19c</fullName>
    </recommendedName>
    <alternativeName>
        <fullName>30S ribosomal protein S19, chloroplastic</fullName>
    </alternativeName>
</protein>
<keyword id="KW-0150">Chloroplast</keyword>
<keyword id="KW-0934">Plastid</keyword>
<keyword id="KW-1185">Reference proteome</keyword>
<keyword id="KW-0687">Ribonucleoprotein</keyword>
<keyword id="KW-0689">Ribosomal protein</keyword>
<keyword id="KW-0694">RNA-binding</keyword>
<keyword id="KW-0699">rRNA-binding</keyword>
<sequence length="92" mass="10608">MTRSLKKNPFVAKHLLRKIEKLNTKAEKEIIITWSRASTIIPTMIGHTIAIHNGREHLPVYIIDLMVGHKLGEFSPTINFRGHAKNDNRSRR</sequence>
<proteinExistence type="inferred from homology"/>
<reference key="1">
    <citation type="journal article" date="1999" name="DNA Res.">
        <title>Complete structure of the chloroplast genome of Arabidopsis thaliana.</title>
        <authorList>
            <person name="Sato S."/>
            <person name="Nakamura Y."/>
            <person name="Kaneko T."/>
            <person name="Asamizu E."/>
            <person name="Tabata S."/>
        </authorList>
    </citation>
    <scope>NUCLEOTIDE SEQUENCE [LARGE SCALE GENOMIC DNA]</scope>
    <source>
        <strain>cv. Columbia</strain>
    </source>
</reference>
<reference key="2">
    <citation type="journal article" date="2023" name="Plant Cell">
        <title>An updated nomenclature for plant ribosomal protein genes.</title>
        <authorList>
            <person name="Scarpin M.R."/>
            <person name="Busche M."/>
            <person name="Martinez R.E."/>
            <person name="Harper L.C."/>
            <person name="Reiser L."/>
            <person name="Szakonyi D."/>
            <person name="Merchante C."/>
            <person name="Lan T."/>
            <person name="Xiong W."/>
            <person name="Mo B."/>
            <person name="Tang G."/>
            <person name="Chen X."/>
            <person name="Bailey-Serres J."/>
            <person name="Browning K.S."/>
            <person name="Brunkard J.O."/>
        </authorList>
    </citation>
    <scope>NOMENCLATURE</scope>
</reference>
<geneLocation type="chloroplast"/>
<accession>P56808</accession>
<evidence type="ECO:0000250" key="1"/>
<evidence type="ECO:0000303" key="2">
    <source>
    </source>
</evidence>
<evidence type="ECO:0000305" key="3"/>
<feature type="chain" id="PRO_0000129953" description="Small ribosomal subunit protein uS19c">
    <location>
        <begin position="1"/>
        <end position="92"/>
    </location>
</feature>
<organism>
    <name type="scientific">Arabidopsis thaliana</name>
    <name type="common">Mouse-ear cress</name>
    <dbReference type="NCBI Taxonomy" id="3702"/>
    <lineage>
        <taxon>Eukaryota</taxon>
        <taxon>Viridiplantae</taxon>
        <taxon>Streptophyta</taxon>
        <taxon>Embryophyta</taxon>
        <taxon>Tracheophyta</taxon>
        <taxon>Spermatophyta</taxon>
        <taxon>Magnoliopsida</taxon>
        <taxon>eudicotyledons</taxon>
        <taxon>Gunneridae</taxon>
        <taxon>Pentapetalae</taxon>
        <taxon>rosids</taxon>
        <taxon>malvids</taxon>
        <taxon>Brassicales</taxon>
        <taxon>Brassicaceae</taxon>
        <taxon>Camelineae</taxon>
        <taxon>Arabidopsis</taxon>
    </lineage>
</organism>